<accession>Q8TTZ9</accession>
<feature type="chain" id="PRO_0000147536" description="Tetrahydromethanopterin S-methyltransferase subunit E">
    <location>
        <begin position="1"/>
        <end position="304"/>
    </location>
</feature>
<feature type="transmembrane region" description="Helical" evidence="1">
    <location>
        <begin position="3"/>
        <end position="23"/>
    </location>
</feature>
<feature type="transmembrane region" description="Helical" evidence="1">
    <location>
        <begin position="86"/>
        <end position="106"/>
    </location>
</feature>
<feature type="transmembrane region" description="Helical" evidence="1">
    <location>
        <begin position="131"/>
        <end position="151"/>
    </location>
</feature>
<feature type="transmembrane region" description="Helical" evidence="1">
    <location>
        <begin position="152"/>
        <end position="172"/>
    </location>
</feature>
<feature type="transmembrane region" description="Helical" evidence="1">
    <location>
        <begin position="233"/>
        <end position="253"/>
    </location>
</feature>
<feature type="transmembrane region" description="Helical" evidence="1">
    <location>
        <begin position="263"/>
        <end position="283"/>
    </location>
</feature>
<protein>
    <recommendedName>
        <fullName evidence="1">Tetrahydromethanopterin S-methyltransferase subunit E</fullName>
        <ecNumber evidence="1">7.2.1.4</ecNumber>
    </recommendedName>
    <alternativeName>
        <fullName evidence="1">N5-methyltetrahydromethanopterin--coenzyme M methyltransferase subunit E</fullName>
    </alternativeName>
</protein>
<evidence type="ECO:0000255" key="1">
    <source>
        <dbReference type="HAMAP-Rule" id="MF_01098"/>
    </source>
</evidence>
<organism>
    <name type="scientific">Methanosarcina acetivorans (strain ATCC 35395 / DSM 2834 / JCM 12185 / C2A)</name>
    <dbReference type="NCBI Taxonomy" id="188937"/>
    <lineage>
        <taxon>Archaea</taxon>
        <taxon>Methanobacteriati</taxon>
        <taxon>Methanobacteriota</taxon>
        <taxon>Stenosarchaea group</taxon>
        <taxon>Methanomicrobia</taxon>
        <taxon>Methanosarcinales</taxon>
        <taxon>Methanosarcinaceae</taxon>
        <taxon>Methanosarcina</taxon>
    </lineage>
</organism>
<reference key="1">
    <citation type="journal article" date="2002" name="Genome Res.">
        <title>The genome of Methanosarcina acetivorans reveals extensive metabolic and physiological diversity.</title>
        <authorList>
            <person name="Galagan J.E."/>
            <person name="Nusbaum C."/>
            <person name="Roy A."/>
            <person name="Endrizzi M.G."/>
            <person name="Macdonald P."/>
            <person name="FitzHugh W."/>
            <person name="Calvo S."/>
            <person name="Engels R."/>
            <person name="Smirnov S."/>
            <person name="Atnoor D."/>
            <person name="Brown A."/>
            <person name="Allen N."/>
            <person name="Naylor J."/>
            <person name="Stange-Thomann N."/>
            <person name="DeArellano K."/>
            <person name="Johnson R."/>
            <person name="Linton L."/>
            <person name="McEwan P."/>
            <person name="McKernan K."/>
            <person name="Talamas J."/>
            <person name="Tirrell A."/>
            <person name="Ye W."/>
            <person name="Zimmer A."/>
            <person name="Barber R.D."/>
            <person name="Cann I."/>
            <person name="Graham D.E."/>
            <person name="Grahame D.A."/>
            <person name="Guss A.M."/>
            <person name="Hedderich R."/>
            <person name="Ingram-Smith C."/>
            <person name="Kuettner H.C."/>
            <person name="Krzycki J.A."/>
            <person name="Leigh J.A."/>
            <person name="Li W."/>
            <person name="Liu J."/>
            <person name="Mukhopadhyay B."/>
            <person name="Reeve J.N."/>
            <person name="Smith K."/>
            <person name="Springer T.A."/>
            <person name="Umayam L.A."/>
            <person name="White O."/>
            <person name="White R.H."/>
            <person name="de Macario E.C."/>
            <person name="Ferry J.G."/>
            <person name="Jarrell K.F."/>
            <person name="Jing H."/>
            <person name="Macario A.J.L."/>
            <person name="Paulsen I.T."/>
            <person name="Pritchett M."/>
            <person name="Sowers K.R."/>
            <person name="Swanson R.V."/>
            <person name="Zinder S.H."/>
            <person name="Lander E."/>
            <person name="Metcalf W.W."/>
            <person name="Birren B."/>
        </authorList>
    </citation>
    <scope>NUCLEOTIDE SEQUENCE [LARGE SCALE GENOMIC DNA]</scope>
    <source>
        <strain>ATCC 35395 / DSM 2834 / JCM 12185 / C2A</strain>
    </source>
</reference>
<gene>
    <name evidence="1" type="primary">mtrE</name>
    <name type="ordered locus">MA_0276</name>
</gene>
<keyword id="KW-1003">Cell membrane</keyword>
<keyword id="KW-0472">Membrane</keyword>
<keyword id="KW-0484">Methanogenesis</keyword>
<keyword id="KW-0489">Methyltransferase</keyword>
<keyword id="KW-0554">One-carbon metabolism</keyword>
<keyword id="KW-1185">Reference proteome</keyword>
<keyword id="KW-0808">Transferase</keyword>
<keyword id="KW-1278">Translocase</keyword>
<keyword id="KW-0812">Transmembrane</keyword>
<keyword id="KW-1133">Transmembrane helix</keyword>
<name>MTRE_METAC</name>
<proteinExistence type="inferred from homology"/>
<dbReference type="EC" id="7.2.1.4" evidence="1"/>
<dbReference type="EMBL" id="AE010299">
    <property type="protein sequence ID" value="AAM03729.1"/>
    <property type="molecule type" value="Genomic_DNA"/>
</dbReference>
<dbReference type="RefSeq" id="WP_011020334.1">
    <property type="nucleotide sequence ID" value="NC_003552.1"/>
</dbReference>
<dbReference type="SMR" id="Q8TTZ9"/>
<dbReference type="FunCoup" id="Q8TTZ9">
    <property type="interactions" value="74"/>
</dbReference>
<dbReference type="STRING" id="188937.MA_0276"/>
<dbReference type="EnsemblBacteria" id="AAM03729">
    <property type="protein sequence ID" value="AAM03729"/>
    <property type="gene ID" value="MA_0276"/>
</dbReference>
<dbReference type="GeneID" id="1472168"/>
<dbReference type="KEGG" id="mac:MA_0276"/>
<dbReference type="HOGENOM" id="CLU_958513_0_0_2"/>
<dbReference type="InParanoid" id="Q8TTZ9"/>
<dbReference type="OrthoDB" id="82302at2157"/>
<dbReference type="PhylomeDB" id="Q8TTZ9"/>
<dbReference type="UniPathway" id="UPA00640">
    <property type="reaction ID" value="UER00698"/>
</dbReference>
<dbReference type="Proteomes" id="UP000002487">
    <property type="component" value="Chromosome"/>
</dbReference>
<dbReference type="GO" id="GO:0005737">
    <property type="term" value="C:cytoplasm"/>
    <property type="evidence" value="ECO:0007669"/>
    <property type="project" value="InterPro"/>
</dbReference>
<dbReference type="GO" id="GO:0005886">
    <property type="term" value="C:plasma membrane"/>
    <property type="evidence" value="ECO:0007669"/>
    <property type="project" value="UniProtKB-SubCell"/>
</dbReference>
<dbReference type="GO" id="GO:0012506">
    <property type="term" value="C:vesicle membrane"/>
    <property type="evidence" value="ECO:0007669"/>
    <property type="project" value="InterPro"/>
</dbReference>
<dbReference type="GO" id="GO:0030269">
    <property type="term" value="F:tetrahydromethanopterin S-methyltransferase activity"/>
    <property type="evidence" value="ECO:0007669"/>
    <property type="project" value="UniProtKB-UniRule"/>
</dbReference>
<dbReference type="GO" id="GO:0019386">
    <property type="term" value="P:methanogenesis, from carbon dioxide"/>
    <property type="evidence" value="ECO:0007669"/>
    <property type="project" value="UniProtKB-UniRule"/>
</dbReference>
<dbReference type="GO" id="GO:0032259">
    <property type="term" value="P:methylation"/>
    <property type="evidence" value="ECO:0007669"/>
    <property type="project" value="UniProtKB-KW"/>
</dbReference>
<dbReference type="GO" id="GO:0006730">
    <property type="term" value="P:one-carbon metabolic process"/>
    <property type="evidence" value="ECO:0007669"/>
    <property type="project" value="UniProtKB-UniRule"/>
</dbReference>
<dbReference type="HAMAP" id="MF_01098">
    <property type="entry name" value="MtrE"/>
    <property type="match status" value="1"/>
</dbReference>
<dbReference type="InterPro" id="IPR005780">
    <property type="entry name" value="MeTrfase_E"/>
</dbReference>
<dbReference type="NCBIfam" id="TIGR01113">
    <property type="entry name" value="mtrE"/>
    <property type="match status" value="1"/>
</dbReference>
<dbReference type="Pfam" id="PF04206">
    <property type="entry name" value="MtrE"/>
    <property type="match status" value="1"/>
</dbReference>
<dbReference type="PIRSF" id="PIRSF016509">
    <property type="entry name" value="MtrE"/>
    <property type="match status" value="1"/>
</dbReference>
<sequence length="304" mass="32434">MEPLIGMGVLALIGVAATIAGASEDLESDVGSQSNPNSQVQLAPQMMFPHRIFNKAVSGEPPSNALMCSVGAAVATVLISEFTLSPLFALVLGALIAACVHGTFAVTSTMGRAASQSRFKQPVYLDMIRSHTPVIMGYSFITTFCILVVSYLMTVVLGHPFPLTMLAFIWGITVGAIGSSTGDVHYGAEREFQQFEFGSGLNASNSGNIVRYGESGVRNGYDNSWFCAKFGGPVTGMAFGMTVFLGSWVTTVFDPAVSISRGWISVVAGVIIVLILIFWNWKIEVKARNAYGPYKEDKTEEASA</sequence>
<comment type="function">
    <text evidence="1">Part of a complex that catalyzes the formation of methyl-coenzyme M and tetrahydromethanopterin from coenzyme M and methyl-tetrahydromethanopterin. This is an energy-conserving, sodium-ion translocating step.</text>
</comment>
<comment type="catalytic activity">
    <reaction evidence="1">
        <text>5-methyl-5,6,7,8-tetrahydromethanopterin + coenzyme M + 2 Na(+)(in) = 5,6,7,8-tetrahydromethanopterin + methyl-coenzyme M + 2 Na(+)(out)</text>
        <dbReference type="Rhea" id="RHEA:53492"/>
        <dbReference type="ChEBI" id="CHEBI:29101"/>
        <dbReference type="ChEBI" id="CHEBI:58103"/>
        <dbReference type="ChEBI" id="CHEBI:58116"/>
        <dbReference type="ChEBI" id="CHEBI:58286"/>
        <dbReference type="ChEBI" id="CHEBI:58319"/>
        <dbReference type="EC" id="7.2.1.4"/>
    </reaction>
</comment>
<comment type="pathway">
    <text evidence="1">One-carbon metabolism; methanogenesis from CO(2); methyl-coenzyme M from 5,10-methylene-5,6,7,8-tetrahydromethanopterin: step 2/2.</text>
</comment>
<comment type="subunit">
    <text evidence="1">The complex is composed of 8 subunits; MtrA, MtrB, MtrC, MtrD, MtrE, MtrF, MtrG and MtrH.</text>
</comment>
<comment type="subcellular location">
    <subcellularLocation>
        <location evidence="1">Cell membrane</location>
        <topology evidence="1">Multi-pass membrane protein</topology>
    </subcellularLocation>
</comment>
<comment type="similarity">
    <text evidence="1">Belongs to the MtrE family.</text>
</comment>